<organism>
    <name type="scientific">Nitratiruptor sp. (strain SB155-2)</name>
    <dbReference type="NCBI Taxonomy" id="387092"/>
    <lineage>
        <taxon>Bacteria</taxon>
        <taxon>Pseudomonadati</taxon>
        <taxon>Campylobacterota</taxon>
        <taxon>Epsilonproteobacteria</taxon>
        <taxon>Nautiliales</taxon>
        <taxon>Nitratiruptoraceae</taxon>
        <taxon>Nitratiruptor</taxon>
    </lineage>
</organism>
<dbReference type="EC" id="4.1.1.48" evidence="1"/>
<dbReference type="EMBL" id="AP009178">
    <property type="protein sequence ID" value="BAF70099.1"/>
    <property type="molecule type" value="Genomic_DNA"/>
</dbReference>
<dbReference type="RefSeq" id="WP_012082362.1">
    <property type="nucleotide sequence ID" value="NC_009662.1"/>
</dbReference>
<dbReference type="SMR" id="A6Q3P0"/>
<dbReference type="FunCoup" id="A6Q3P0">
    <property type="interactions" value="313"/>
</dbReference>
<dbReference type="STRING" id="387092.NIS_0989"/>
<dbReference type="KEGG" id="nis:NIS_0989"/>
<dbReference type="eggNOG" id="COG0134">
    <property type="taxonomic scope" value="Bacteria"/>
</dbReference>
<dbReference type="HOGENOM" id="CLU_034247_2_0_7"/>
<dbReference type="InParanoid" id="A6Q3P0"/>
<dbReference type="OrthoDB" id="9804217at2"/>
<dbReference type="UniPathway" id="UPA00035">
    <property type="reaction ID" value="UER00043"/>
</dbReference>
<dbReference type="Proteomes" id="UP000001118">
    <property type="component" value="Chromosome"/>
</dbReference>
<dbReference type="GO" id="GO:0004425">
    <property type="term" value="F:indole-3-glycerol-phosphate synthase activity"/>
    <property type="evidence" value="ECO:0007669"/>
    <property type="project" value="UniProtKB-UniRule"/>
</dbReference>
<dbReference type="GO" id="GO:0004640">
    <property type="term" value="F:phosphoribosylanthranilate isomerase activity"/>
    <property type="evidence" value="ECO:0007669"/>
    <property type="project" value="TreeGrafter"/>
</dbReference>
<dbReference type="GO" id="GO:0000162">
    <property type="term" value="P:L-tryptophan biosynthetic process"/>
    <property type="evidence" value="ECO:0007669"/>
    <property type="project" value="UniProtKB-UniRule"/>
</dbReference>
<dbReference type="CDD" id="cd00331">
    <property type="entry name" value="IGPS"/>
    <property type="match status" value="1"/>
</dbReference>
<dbReference type="FunFam" id="3.20.20.70:FF:000024">
    <property type="entry name" value="Indole-3-glycerol phosphate synthase"/>
    <property type="match status" value="1"/>
</dbReference>
<dbReference type="Gene3D" id="3.20.20.70">
    <property type="entry name" value="Aldolase class I"/>
    <property type="match status" value="1"/>
</dbReference>
<dbReference type="HAMAP" id="MF_00134_A">
    <property type="entry name" value="IGPS_A"/>
    <property type="match status" value="1"/>
</dbReference>
<dbReference type="HAMAP" id="MF_00134_B">
    <property type="entry name" value="IGPS_B"/>
    <property type="match status" value="1"/>
</dbReference>
<dbReference type="InterPro" id="IPR013785">
    <property type="entry name" value="Aldolase_TIM"/>
</dbReference>
<dbReference type="InterPro" id="IPR045186">
    <property type="entry name" value="Indole-3-glycerol_P_synth"/>
</dbReference>
<dbReference type="InterPro" id="IPR013798">
    <property type="entry name" value="Indole-3-glycerol_P_synth_dom"/>
</dbReference>
<dbReference type="InterPro" id="IPR001468">
    <property type="entry name" value="Indole-3-GlycerolPSynthase_CS"/>
</dbReference>
<dbReference type="InterPro" id="IPR011060">
    <property type="entry name" value="RibuloseP-bd_barrel"/>
</dbReference>
<dbReference type="NCBIfam" id="NF001377">
    <property type="entry name" value="PRK00278.2-4"/>
    <property type="match status" value="1"/>
</dbReference>
<dbReference type="NCBIfam" id="NF001378">
    <property type="entry name" value="PRK00278.2-5"/>
    <property type="match status" value="1"/>
</dbReference>
<dbReference type="PANTHER" id="PTHR22854:SF2">
    <property type="entry name" value="INDOLE-3-GLYCEROL-PHOSPHATE SYNTHASE"/>
    <property type="match status" value="1"/>
</dbReference>
<dbReference type="PANTHER" id="PTHR22854">
    <property type="entry name" value="TRYPTOPHAN BIOSYNTHESIS PROTEIN"/>
    <property type="match status" value="1"/>
</dbReference>
<dbReference type="Pfam" id="PF00218">
    <property type="entry name" value="IGPS"/>
    <property type="match status" value="1"/>
</dbReference>
<dbReference type="SUPFAM" id="SSF51366">
    <property type="entry name" value="Ribulose-phoshate binding barrel"/>
    <property type="match status" value="1"/>
</dbReference>
<dbReference type="PROSITE" id="PS00614">
    <property type="entry name" value="IGPS"/>
    <property type="match status" value="1"/>
</dbReference>
<comment type="catalytic activity">
    <reaction evidence="1">
        <text>1-(2-carboxyphenylamino)-1-deoxy-D-ribulose 5-phosphate + H(+) = (1S,2R)-1-C-(indol-3-yl)glycerol 3-phosphate + CO2 + H2O</text>
        <dbReference type="Rhea" id="RHEA:23476"/>
        <dbReference type="ChEBI" id="CHEBI:15377"/>
        <dbReference type="ChEBI" id="CHEBI:15378"/>
        <dbReference type="ChEBI" id="CHEBI:16526"/>
        <dbReference type="ChEBI" id="CHEBI:58613"/>
        <dbReference type="ChEBI" id="CHEBI:58866"/>
        <dbReference type="EC" id="4.1.1.48"/>
    </reaction>
</comment>
<comment type="pathway">
    <text evidence="1">Amino-acid biosynthesis; L-tryptophan biosynthesis; L-tryptophan from chorismate: step 4/5.</text>
</comment>
<comment type="similarity">
    <text evidence="1">Belongs to the TrpC family.</text>
</comment>
<protein>
    <recommendedName>
        <fullName evidence="1">Indole-3-glycerol phosphate synthase</fullName>
        <shortName evidence="1">IGPS</shortName>
        <ecNumber evidence="1">4.1.1.48</ecNumber>
    </recommendedName>
</protein>
<evidence type="ECO:0000255" key="1">
    <source>
        <dbReference type="HAMAP-Rule" id="MF_00134"/>
    </source>
</evidence>
<gene>
    <name evidence="1" type="primary">trpC</name>
    <name type="ordered locus">NIS_0989</name>
</gene>
<feature type="chain" id="PRO_1000018511" description="Indole-3-glycerol phosphate synthase">
    <location>
        <begin position="1"/>
        <end position="262"/>
    </location>
</feature>
<reference key="1">
    <citation type="journal article" date="2007" name="Proc. Natl. Acad. Sci. U.S.A.">
        <title>Deep-sea vent epsilon-proteobacterial genomes provide insights into emergence of pathogens.</title>
        <authorList>
            <person name="Nakagawa S."/>
            <person name="Takaki Y."/>
            <person name="Shimamura S."/>
            <person name="Reysenbach A.-L."/>
            <person name="Takai K."/>
            <person name="Horikoshi K."/>
        </authorList>
    </citation>
    <scope>NUCLEOTIDE SEQUENCE [LARGE SCALE GENOMIC DNA]</scope>
    <source>
        <strain>SB155-2</strain>
    </source>
</reference>
<proteinExistence type="inferred from homology"/>
<name>TRPC_NITSB</name>
<accession>A6Q3P0</accession>
<sequence length="262" mass="29800">MILDEIIKKTKADLEKRKKEYPLEWLGRSLAYNPFVPRPVEEVLKSTPDDPYKIIAEVKKASPSKGVIREDFDPVAIAKEYEKGGANAISVLTEPHYFQGHIEYLTQIRRYVPMPLLRKDFIIDKYQLVEALVYGADFVLLIAKALSRKELKELLEYTWHLGMEALVEIHDKADLIKAIFAGANIIGINHRNLETFEMDMSLSEKLIPLIPNGKIIVAESGIHSHEQVVELNKLGVDAFLIGEHFMRQDNIAEVVKKIKGLA</sequence>
<keyword id="KW-0028">Amino-acid biosynthesis</keyword>
<keyword id="KW-0057">Aromatic amino acid biosynthesis</keyword>
<keyword id="KW-0210">Decarboxylase</keyword>
<keyword id="KW-0456">Lyase</keyword>
<keyword id="KW-1185">Reference proteome</keyword>
<keyword id="KW-0822">Tryptophan biosynthesis</keyword>